<gene>
    <name evidence="1" type="primary">rplN</name>
    <name type="ordered locus">MHJ_0180</name>
</gene>
<accession>Q4AAF0</accession>
<proteinExistence type="inferred from homology"/>
<keyword id="KW-0687">Ribonucleoprotein</keyword>
<keyword id="KW-0689">Ribosomal protein</keyword>
<keyword id="KW-0694">RNA-binding</keyword>
<keyword id="KW-0699">rRNA-binding</keyword>
<protein>
    <recommendedName>
        <fullName evidence="1">Large ribosomal subunit protein uL14</fullName>
    </recommendedName>
    <alternativeName>
        <fullName evidence="2">50S ribosomal protein L14</fullName>
    </alternativeName>
</protein>
<evidence type="ECO:0000255" key="1">
    <source>
        <dbReference type="HAMAP-Rule" id="MF_01367"/>
    </source>
</evidence>
<evidence type="ECO:0000305" key="2"/>
<organism>
    <name type="scientific">Mesomycoplasma hyopneumoniae (strain J / ATCC 25934 / NCTC 10110)</name>
    <name type="common">Mycoplasma hyopneumoniae</name>
    <dbReference type="NCBI Taxonomy" id="262719"/>
    <lineage>
        <taxon>Bacteria</taxon>
        <taxon>Bacillati</taxon>
        <taxon>Mycoplasmatota</taxon>
        <taxon>Mycoplasmoidales</taxon>
        <taxon>Metamycoplasmataceae</taxon>
        <taxon>Mesomycoplasma</taxon>
    </lineage>
</organism>
<dbReference type="EMBL" id="AE017243">
    <property type="protein sequence ID" value="AAZ44271.1"/>
    <property type="molecule type" value="Genomic_DNA"/>
</dbReference>
<dbReference type="RefSeq" id="WP_011206035.1">
    <property type="nucleotide sequence ID" value="NC_007295.1"/>
</dbReference>
<dbReference type="SMR" id="Q4AAF0"/>
<dbReference type="GeneID" id="41334483"/>
<dbReference type="KEGG" id="mhj:MHJ_0180"/>
<dbReference type="eggNOG" id="COG0093">
    <property type="taxonomic scope" value="Bacteria"/>
</dbReference>
<dbReference type="HOGENOM" id="CLU_095071_2_1_14"/>
<dbReference type="OrthoDB" id="9806379at2"/>
<dbReference type="Proteomes" id="UP000000548">
    <property type="component" value="Chromosome"/>
</dbReference>
<dbReference type="GO" id="GO:0022625">
    <property type="term" value="C:cytosolic large ribosomal subunit"/>
    <property type="evidence" value="ECO:0007669"/>
    <property type="project" value="TreeGrafter"/>
</dbReference>
<dbReference type="GO" id="GO:0070180">
    <property type="term" value="F:large ribosomal subunit rRNA binding"/>
    <property type="evidence" value="ECO:0007669"/>
    <property type="project" value="TreeGrafter"/>
</dbReference>
<dbReference type="GO" id="GO:0003735">
    <property type="term" value="F:structural constituent of ribosome"/>
    <property type="evidence" value="ECO:0007669"/>
    <property type="project" value="InterPro"/>
</dbReference>
<dbReference type="GO" id="GO:0006412">
    <property type="term" value="P:translation"/>
    <property type="evidence" value="ECO:0007669"/>
    <property type="project" value="UniProtKB-UniRule"/>
</dbReference>
<dbReference type="CDD" id="cd00337">
    <property type="entry name" value="Ribosomal_uL14"/>
    <property type="match status" value="1"/>
</dbReference>
<dbReference type="Gene3D" id="2.40.150.20">
    <property type="entry name" value="Ribosomal protein L14"/>
    <property type="match status" value="1"/>
</dbReference>
<dbReference type="HAMAP" id="MF_01367">
    <property type="entry name" value="Ribosomal_uL14"/>
    <property type="match status" value="1"/>
</dbReference>
<dbReference type="InterPro" id="IPR000218">
    <property type="entry name" value="Ribosomal_uL14"/>
</dbReference>
<dbReference type="InterPro" id="IPR005745">
    <property type="entry name" value="Ribosomal_uL14_bac-type"/>
</dbReference>
<dbReference type="InterPro" id="IPR019972">
    <property type="entry name" value="Ribosomal_uL14_CS"/>
</dbReference>
<dbReference type="InterPro" id="IPR036853">
    <property type="entry name" value="Ribosomal_uL14_sf"/>
</dbReference>
<dbReference type="NCBIfam" id="TIGR01067">
    <property type="entry name" value="rplN_bact"/>
    <property type="match status" value="1"/>
</dbReference>
<dbReference type="PANTHER" id="PTHR11761">
    <property type="entry name" value="50S/60S RIBOSOMAL PROTEIN L14/L23"/>
    <property type="match status" value="1"/>
</dbReference>
<dbReference type="PANTHER" id="PTHR11761:SF3">
    <property type="entry name" value="LARGE RIBOSOMAL SUBUNIT PROTEIN UL14M"/>
    <property type="match status" value="1"/>
</dbReference>
<dbReference type="Pfam" id="PF00238">
    <property type="entry name" value="Ribosomal_L14"/>
    <property type="match status" value="1"/>
</dbReference>
<dbReference type="SMART" id="SM01374">
    <property type="entry name" value="Ribosomal_L14"/>
    <property type="match status" value="1"/>
</dbReference>
<dbReference type="SUPFAM" id="SSF50193">
    <property type="entry name" value="Ribosomal protein L14"/>
    <property type="match status" value="1"/>
</dbReference>
<dbReference type="PROSITE" id="PS00049">
    <property type="entry name" value="RIBOSOMAL_L14"/>
    <property type="match status" value="1"/>
</dbReference>
<name>RL14_MESHJ</name>
<reference key="1">
    <citation type="journal article" date="2005" name="J. Bacteriol.">
        <title>Swine and poultry pathogens: the complete genome sequences of two strains of Mycoplasma hyopneumoniae and a strain of Mycoplasma synoviae.</title>
        <authorList>
            <person name="Vasconcelos A.T.R."/>
            <person name="Ferreira H.B."/>
            <person name="Bizarro C.V."/>
            <person name="Bonatto S.L."/>
            <person name="Carvalho M.O."/>
            <person name="Pinto P.M."/>
            <person name="Almeida D.F."/>
            <person name="Almeida L.G.P."/>
            <person name="Almeida R."/>
            <person name="Alves-Junior L."/>
            <person name="Assuncao E.N."/>
            <person name="Azevedo V.A.C."/>
            <person name="Bogo M.R."/>
            <person name="Brigido M.M."/>
            <person name="Brocchi M."/>
            <person name="Burity H.A."/>
            <person name="Camargo A.A."/>
            <person name="Camargo S.S."/>
            <person name="Carepo M.S."/>
            <person name="Carraro D.M."/>
            <person name="de Mattos Cascardo J.C."/>
            <person name="Castro L.A."/>
            <person name="Cavalcanti G."/>
            <person name="Chemale G."/>
            <person name="Collevatti R.G."/>
            <person name="Cunha C.W."/>
            <person name="Dallagiovanna B."/>
            <person name="Dambros B.P."/>
            <person name="Dellagostin O.A."/>
            <person name="Falcao C."/>
            <person name="Fantinatti-Garboggini F."/>
            <person name="Felipe M.S.S."/>
            <person name="Fiorentin L."/>
            <person name="Franco G.R."/>
            <person name="Freitas N.S.A."/>
            <person name="Frias D."/>
            <person name="Grangeiro T.B."/>
            <person name="Grisard E.C."/>
            <person name="Guimaraes C.T."/>
            <person name="Hungria M."/>
            <person name="Jardim S.N."/>
            <person name="Krieger M.A."/>
            <person name="Laurino J.P."/>
            <person name="Lima L.F.A."/>
            <person name="Lopes M.I."/>
            <person name="Loreto E.L.S."/>
            <person name="Madeira H.M.F."/>
            <person name="Manfio G.P."/>
            <person name="Maranhao A.Q."/>
            <person name="Martinkovics C.T."/>
            <person name="Medeiros S.R.B."/>
            <person name="Moreira M.A.M."/>
            <person name="Neiva M."/>
            <person name="Ramalho-Neto C.E."/>
            <person name="Nicolas M.F."/>
            <person name="Oliveira S.C."/>
            <person name="Paixao R.F.C."/>
            <person name="Pedrosa F.O."/>
            <person name="Pena S.D.J."/>
            <person name="Pereira M."/>
            <person name="Pereira-Ferrari L."/>
            <person name="Piffer I."/>
            <person name="Pinto L.S."/>
            <person name="Potrich D.P."/>
            <person name="Salim A.C.M."/>
            <person name="Santos F.R."/>
            <person name="Schmitt R."/>
            <person name="Schneider M.P.C."/>
            <person name="Schrank A."/>
            <person name="Schrank I.S."/>
            <person name="Schuck A.F."/>
            <person name="Seuanez H.N."/>
            <person name="Silva D.W."/>
            <person name="Silva R."/>
            <person name="Silva S.C."/>
            <person name="Soares C.M.A."/>
            <person name="Souza K.R.L."/>
            <person name="Souza R.C."/>
            <person name="Staats C.C."/>
            <person name="Steffens M.B.R."/>
            <person name="Teixeira S.M.R."/>
            <person name="Urmenyi T.P."/>
            <person name="Vainstein M.H."/>
            <person name="Zuccherato L.W."/>
            <person name="Simpson A.J.G."/>
            <person name="Zaha A."/>
        </authorList>
    </citation>
    <scope>NUCLEOTIDE SEQUENCE [LARGE SCALE GENOMIC DNA]</scope>
    <source>
        <strain>J / ATCC 25934 / NCTC 10110</strain>
    </source>
</reference>
<feature type="chain" id="PRO_0000355823" description="Large ribosomal subunit protein uL14">
    <location>
        <begin position="1"/>
        <end position="122"/>
    </location>
</feature>
<comment type="function">
    <text evidence="1">Binds to 23S rRNA. Forms part of two intersubunit bridges in the 70S ribosome.</text>
</comment>
<comment type="subunit">
    <text evidence="1">Part of the 50S ribosomal subunit. Forms a cluster with proteins L3 and L19. In the 70S ribosome, L14 and L19 interact and together make contacts with the 16S rRNA in bridges B5 and B8.</text>
</comment>
<comment type="similarity">
    <text evidence="1">Belongs to the universal ribosomal protein uL14 family.</text>
</comment>
<sequence length="122" mass="13223">MLQELSRLNVADNTGAKIVGVIRNLGGSVKKTSNIGDIVVVSVKKAIPNGMLKEGQVVKALIVRSTYGLRRKNGTHIKFDDNAVVIIKEDGTPRGTRVFGPIAREIREKGYLKIASLAQEVL</sequence>